<dbReference type="EC" id="1.1.1.27" evidence="2"/>
<dbReference type="EMBL" id="AF070997">
    <property type="protein sequence ID" value="AAD40734.1"/>
    <property type="molecule type" value="mRNA"/>
</dbReference>
<dbReference type="RefSeq" id="NP_001028150.1">
    <property type="nucleotide sequence ID" value="NM_001032978.1"/>
</dbReference>
<dbReference type="SMR" id="Q9XT86"/>
<dbReference type="FunCoup" id="Q9XT86">
    <property type="interactions" value="196"/>
</dbReference>
<dbReference type="STRING" id="13616.ENSMODP00000022176"/>
<dbReference type="GeneID" id="554182"/>
<dbReference type="KEGG" id="mdo:554182"/>
<dbReference type="CTD" id="3945"/>
<dbReference type="eggNOG" id="KOG1495">
    <property type="taxonomic scope" value="Eukaryota"/>
</dbReference>
<dbReference type="InParanoid" id="Q9XT86"/>
<dbReference type="OrthoDB" id="5405561at2759"/>
<dbReference type="UniPathway" id="UPA00554">
    <property type="reaction ID" value="UER00611"/>
</dbReference>
<dbReference type="Proteomes" id="UP000002280">
    <property type="component" value="Unplaced"/>
</dbReference>
<dbReference type="GO" id="GO:0005743">
    <property type="term" value="C:mitochondrial inner membrane"/>
    <property type="evidence" value="ECO:0000250"/>
    <property type="project" value="UniProtKB"/>
</dbReference>
<dbReference type="GO" id="GO:0005739">
    <property type="term" value="C:mitochondrion"/>
    <property type="evidence" value="ECO:0000318"/>
    <property type="project" value="GO_Central"/>
</dbReference>
<dbReference type="GO" id="GO:0004459">
    <property type="term" value="F:L-lactate dehydrogenase activity"/>
    <property type="evidence" value="ECO:0000250"/>
    <property type="project" value="UniProtKB"/>
</dbReference>
<dbReference type="GO" id="GO:0006089">
    <property type="term" value="P:lactate metabolic process"/>
    <property type="evidence" value="ECO:0000318"/>
    <property type="project" value="GO_Central"/>
</dbReference>
<dbReference type="GO" id="GO:0006090">
    <property type="term" value="P:pyruvate metabolic process"/>
    <property type="evidence" value="ECO:0000318"/>
    <property type="project" value="GO_Central"/>
</dbReference>
<dbReference type="CDD" id="cd05293">
    <property type="entry name" value="LDH_1"/>
    <property type="match status" value="1"/>
</dbReference>
<dbReference type="FunFam" id="3.40.50.720:FF:000029">
    <property type="entry name" value="L-lactate dehydrogenase A chain"/>
    <property type="match status" value="1"/>
</dbReference>
<dbReference type="FunFam" id="3.90.110.10:FF:000003">
    <property type="entry name" value="L-lactate dehydrogenase A chain"/>
    <property type="match status" value="1"/>
</dbReference>
<dbReference type="Gene3D" id="3.90.110.10">
    <property type="entry name" value="Lactate dehydrogenase/glycoside hydrolase, family 4, C-terminal"/>
    <property type="match status" value="1"/>
</dbReference>
<dbReference type="Gene3D" id="3.40.50.720">
    <property type="entry name" value="NAD(P)-binding Rossmann-like Domain"/>
    <property type="match status" value="1"/>
</dbReference>
<dbReference type="HAMAP" id="MF_00488">
    <property type="entry name" value="Lactate_dehydrog"/>
    <property type="match status" value="1"/>
</dbReference>
<dbReference type="InterPro" id="IPR001557">
    <property type="entry name" value="L-lactate/malate_DH"/>
</dbReference>
<dbReference type="InterPro" id="IPR011304">
    <property type="entry name" value="L-lactate_DH"/>
</dbReference>
<dbReference type="InterPro" id="IPR018177">
    <property type="entry name" value="L-lactate_DH_AS"/>
</dbReference>
<dbReference type="InterPro" id="IPR022383">
    <property type="entry name" value="Lactate/malate_DH_C"/>
</dbReference>
<dbReference type="InterPro" id="IPR001236">
    <property type="entry name" value="Lactate/malate_DH_N"/>
</dbReference>
<dbReference type="InterPro" id="IPR015955">
    <property type="entry name" value="Lactate_DH/Glyco_Ohase_4_C"/>
</dbReference>
<dbReference type="InterPro" id="IPR036291">
    <property type="entry name" value="NAD(P)-bd_dom_sf"/>
</dbReference>
<dbReference type="NCBIfam" id="TIGR01771">
    <property type="entry name" value="L-LDH-NAD"/>
    <property type="match status" value="1"/>
</dbReference>
<dbReference type="NCBIfam" id="NF000824">
    <property type="entry name" value="PRK00066.1"/>
    <property type="match status" value="1"/>
</dbReference>
<dbReference type="PANTHER" id="PTHR43128">
    <property type="entry name" value="L-2-HYDROXYCARBOXYLATE DEHYDROGENASE (NAD(P)(+))"/>
    <property type="match status" value="1"/>
</dbReference>
<dbReference type="PANTHER" id="PTHR43128:SF2">
    <property type="entry name" value="L-LACTATE DEHYDROGENASE B CHAIN"/>
    <property type="match status" value="1"/>
</dbReference>
<dbReference type="Pfam" id="PF02866">
    <property type="entry name" value="Ldh_1_C"/>
    <property type="match status" value="1"/>
</dbReference>
<dbReference type="Pfam" id="PF00056">
    <property type="entry name" value="Ldh_1_N"/>
    <property type="match status" value="1"/>
</dbReference>
<dbReference type="PIRSF" id="PIRSF000102">
    <property type="entry name" value="Lac_mal_DH"/>
    <property type="match status" value="1"/>
</dbReference>
<dbReference type="PRINTS" id="PR00086">
    <property type="entry name" value="LLDHDRGNASE"/>
</dbReference>
<dbReference type="SUPFAM" id="SSF56327">
    <property type="entry name" value="LDH C-terminal domain-like"/>
    <property type="match status" value="1"/>
</dbReference>
<dbReference type="SUPFAM" id="SSF51735">
    <property type="entry name" value="NAD(P)-binding Rossmann-fold domains"/>
    <property type="match status" value="1"/>
</dbReference>
<dbReference type="PROSITE" id="PS00064">
    <property type="entry name" value="L_LDH"/>
    <property type="match status" value="1"/>
</dbReference>
<evidence type="ECO:0000250" key="1"/>
<evidence type="ECO:0000250" key="2">
    <source>
        <dbReference type="UniProtKB" id="P07195"/>
    </source>
</evidence>
<evidence type="ECO:0000305" key="3"/>
<keyword id="KW-0007">Acetylation</keyword>
<keyword id="KW-0963">Cytoplasm</keyword>
<keyword id="KW-0472">Membrane</keyword>
<keyword id="KW-0496">Mitochondrion</keyword>
<keyword id="KW-0999">Mitochondrion inner membrane</keyword>
<keyword id="KW-0520">NAD</keyword>
<keyword id="KW-0560">Oxidoreductase</keyword>
<keyword id="KW-0597">Phosphoprotein</keyword>
<keyword id="KW-1185">Reference proteome</keyword>
<organism>
    <name type="scientific">Monodelphis domestica</name>
    <name type="common">Gray short-tailed opossum</name>
    <dbReference type="NCBI Taxonomy" id="13616"/>
    <lineage>
        <taxon>Eukaryota</taxon>
        <taxon>Metazoa</taxon>
        <taxon>Chordata</taxon>
        <taxon>Craniata</taxon>
        <taxon>Vertebrata</taxon>
        <taxon>Euteleostomi</taxon>
        <taxon>Mammalia</taxon>
        <taxon>Metatheria</taxon>
        <taxon>Didelphimorphia</taxon>
        <taxon>Didelphidae</taxon>
        <taxon>Monodelphis</taxon>
    </lineage>
</organism>
<reference key="1">
    <citation type="submission" date="1998-06" db="EMBL/GenBank/DDBJ databases">
        <title>Molecular evolution of vertebrate lactate dehydrogenase isozymes by gene duplication.</title>
        <authorList>
            <person name="Tsoi S.C.-M."/>
            <person name="Li J.Y."/>
            <person name="Mannen H."/>
            <person name="Li S.S.-L."/>
        </authorList>
    </citation>
    <scope>NUCLEOTIDE SEQUENCE [MRNA]</scope>
</reference>
<proteinExistence type="evidence at transcript level"/>
<feature type="initiator methionine" description="Removed" evidence="2">
    <location>
        <position position="1"/>
    </location>
</feature>
<feature type="chain" id="PRO_0000168460" description="L-lactate dehydrogenase B chain">
    <location>
        <begin position="2"/>
        <end position="334"/>
    </location>
</feature>
<feature type="active site" description="Proton acceptor" evidence="1">
    <location>
        <position position="194"/>
    </location>
</feature>
<feature type="binding site" evidence="1">
    <location>
        <begin position="53"/>
        <end position="58"/>
    </location>
    <ligand>
        <name>NAD(+)</name>
        <dbReference type="ChEBI" id="CHEBI:57540"/>
    </ligand>
</feature>
<feature type="binding site" evidence="1">
    <location>
        <position position="100"/>
    </location>
    <ligand>
        <name>NAD(+)</name>
        <dbReference type="ChEBI" id="CHEBI:57540"/>
    </ligand>
</feature>
<feature type="binding site" evidence="1">
    <location>
        <position position="107"/>
    </location>
    <ligand>
        <name>substrate</name>
    </ligand>
</feature>
<feature type="binding site" evidence="1">
    <location>
        <position position="139"/>
    </location>
    <ligand>
        <name>NAD(+)</name>
        <dbReference type="ChEBI" id="CHEBI:57540"/>
    </ligand>
</feature>
<feature type="binding site" evidence="1">
    <location>
        <position position="139"/>
    </location>
    <ligand>
        <name>substrate</name>
    </ligand>
</feature>
<feature type="binding site" evidence="1">
    <location>
        <position position="170"/>
    </location>
    <ligand>
        <name>substrate</name>
    </ligand>
</feature>
<feature type="binding site" evidence="1">
    <location>
        <position position="249"/>
    </location>
    <ligand>
        <name>substrate</name>
    </ligand>
</feature>
<feature type="modified residue" description="N-acetylalanine" evidence="2">
    <location>
        <position position="2"/>
    </location>
</feature>
<feature type="modified residue" description="N6-acetyllysine" evidence="2">
    <location>
        <position position="7"/>
    </location>
</feature>
<feature type="modified residue" description="Phosphoserine" evidence="2">
    <location>
        <position position="44"/>
    </location>
</feature>
<feature type="modified residue" description="N6-acetyllysine" evidence="2">
    <location>
        <position position="58"/>
    </location>
</feature>
<feature type="modified residue" description="N6-acetyllysine" evidence="2">
    <location>
        <position position="119"/>
    </location>
</feature>
<feature type="modified residue" description="Phosphotyrosine" evidence="2">
    <location>
        <position position="240"/>
    </location>
</feature>
<feature type="modified residue" description="N6-acetyllysine" evidence="2">
    <location>
        <position position="329"/>
    </location>
</feature>
<gene>
    <name type="primary">LDHB</name>
</gene>
<sequence>MATLKEKLIAPVAEEEAAAPNNKITVVGVGQVGMACAISILGKSLADELALVDVLEDKLKGEMMDLQHGSLFFQTPKIVADKDYSVTAGSKIVVVTAGVRQQEGESRLNLVQRNVNVFKFIIPQIVKYSPDCTIIVVSNPVDILTYVTWKLSGLPKHRVIGSGCNLDSARFRYLMSEKLGIHPSSCHGWILGEHGDSSVAVWSGVNVAGVSLQELNPEMGTDNDSENWKEVHKLVIESAYEVIKLKGYTNWAIGLSVADLIETMLKNLSRIHPVSTMVKGMYGIENEVFLSLPCILNARGLTSVINQKLKDDEVAQLKKSADTLWDIQKDLKDL</sequence>
<comment type="function">
    <text evidence="2">Interconverts simultaneously and stereospecifically pyruvate and lactate with concomitant interconversion of NADH and NAD(+).</text>
</comment>
<comment type="catalytic activity">
    <reaction evidence="2">
        <text>(S)-lactate + NAD(+) = pyruvate + NADH + H(+)</text>
        <dbReference type="Rhea" id="RHEA:23444"/>
        <dbReference type="ChEBI" id="CHEBI:15361"/>
        <dbReference type="ChEBI" id="CHEBI:15378"/>
        <dbReference type="ChEBI" id="CHEBI:16651"/>
        <dbReference type="ChEBI" id="CHEBI:57540"/>
        <dbReference type="ChEBI" id="CHEBI:57945"/>
        <dbReference type="EC" id="1.1.1.27"/>
    </reaction>
    <physiologicalReaction direction="left-to-right" evidence="2">
        <dbReference type="Rhea" id="RHEA:23445"/>
    </physiologicalReaction>
    <physiologicalReaction direction="right-to-left" evidence="2">
        <dbReference type="Rhea" id="RHEA:23446"/>
    </physiologicalReaction>
</comment>
<comment type="pathway">
    <text evidence="2">Fermentation; pyruvate fermentation to lactate; (S)-lactate from pyruvate: step 1/1.</text>
</comment>
<comment type="subunit">
    <text evidence="2">Homotetramer. Interacts with PTEN upstream reading frame protein MP31; the interaction leads to inhibition of mitochondrial lactate dehydrogenase activity, preventing conversion of lactate to pyruvate in mitochondria.</text>
</comment>
<comment type="subcellular location">
    <subcellularLocation>
        <location evidence="1">Cytoplasm</location>
    </subcellularLocation>
    <subcellularLocation>
        <location evidence="2">Mitochondrion inner membrane</location>
        <topology evidence="3">Peripheral membrane protein</topology>
    </subcellularLocation>
</comment>
<comment type="similarity">
    <text evidence="3">Belongs to the LDH/MDH superfamily. LDH family.</text>
</comment>
<protein>
    <recommendedName>
        <fullName>L-lactate dehydrogenase B chain</fullName>
        <shortName>LDH-B</shortName>
        <ecNumber evidence="2">1.1.1.27</ecNumber>
    </recommendedName>
    <alternativeName>
        <fullName>LDH heart subunit</fullName>
        <shortName>LDH-H</shortName>
    </alternativeName>
</protein>
<name>LDHB_MONDO</name>
<accession>Q9XT86</accession>